<comment type="function">
    <text evidence="1">Catalyzes the ATP-dependent 2-thiolation of cytidine in position 32 of tRNA, to form 2-thiocytidine (s(2)C32). The sulfur atoms are provided by the cysteine/cysteine desulfurase (IscS) system.</text>
</comment>
<comment type="catalytic activity">
    <reaction evidence="1">
        <text>cytidine(32) in tRNA + S-sulfanyl-L-cysteinyl-[cysteine desulfurase] + AH2 + ATP = 2-thiocytidine(32) in tRNA + L-cysteinyl-[cysteine desulfurase] + A + AMP + diphosphate + H(+)</text>
        <dbReference type="Rhea" id="RHEA:57048"/>
        <dbReference type="Rhea" id="RHEA-COMP:10288"/>
        <dbReference type="Rhea" id="RHEA-COMP:12157"/>
        <dbReference type="Rhea" id="RHEA-COMP:12158"/>
        <dbReference type="Rhea" id="RHEA-COMP:14821"/>
        <dbReference type="ChEBI" id="CHEBI:13193"/>
        <dbReference type="ChEBI" id="CHEBI:15378"/>
        <dbReference type="ChEBI" id="CHEBI:17499"/>
        <dbReference type="ChEBI" id="CHEBI:29950"/>
        <dbReference type="ChEBI" id="CHEBI:30616"/>
        <dbReference type="ChEBI" id="CHEBI:33019"/>
        <dbReference type="ChEBI" id="CHEBI:61963"/>
        <dbReference type="ChEBI" id="CHEBI:82748"/>
        <dbReference type="ChEBI" id="CHEBI:141453"/>
        <dbReference type="ChEBI" id="CHEBI:456215"/>
    </reaction>
    <physiologicalReaction direction="left-to-right" evidence="1">
        <dbReference type="Rhea" id="RHEA:57049"/>
    </physiologicalReaction>
</comment>
<comment type="cofactor">
    <cofactor evidence="1">
        <name>Mg(2+)</name>
        <dbReference type="ChEBI" id="CHEBI:18420"/>
    </cofactor>
</comment>
<comment type="cofactor">
    <cofactor evidence="1">
        <name>[4Fe-4S] cluster</name>
        <dbReference type="ChEBI" id="CHEBI:49883"/>
    </cofactor>
    <text evidence="1">Binds 1 [4Fe-4S] cluster per subunit. The cluster is chelated by three Cys residues, the fourth Fe has a free coordination site that may bind a sulfur atom transferred from the persulfide of IscS.</text>
</comment>
<comment type="pathway">
    <text evidence="1">tRNA modification.</text>
</comment>
<comment type="subunit">
    <text evidence="1">Homodimer.</text>
</comment>
<comment type="subcellular location">
    <subcellularLocation>
        <location evidence="1">Cytoplasm</location>
    </subcellularLocation>
</comment>
<comment type="miscellaneous">
    <text evidence="1">The thiolation reaction likely consists of two steps: a first activation step by ATP to form an adenylated intermediate of the target base of tRNA, and a second nucleophilic substitution step of the sulfur (S) atom supplied by the hydrosulfide attached to the Fe-S cluster.</text>
</comment>
<comment type="similarity">
    <text evidence="1">Belongs to the TtcA family.</text>
</comment>
<dbReference type="EC" id="2.8.1.-" evidence="1"/>
<dbReference type="EMBL" id="AM040264">
    <property type="protein sequence ID" value="CAJ10808.1"/>
    <property type="molecule type" value="Genomic_DNA"/>
</dbReference>
<dbReference type="RefSeq" id="WP_002969416.1">
    <property type="nucleotide sequence ID" value="NZ_KN046823.1"/>
</dbReference>
<dbReference type="SMR" id="Q2YNH1"/>
<dbReference type="STRING" id="359391.BAB1_0852"/>
<dbReference type="GeneID" id="93016786"/>
<dbReference type="KEGG" id="bmf:BAB1_0852"/>
<dbReference type="PATRIC" id="fig|359391.11.peg.3161"/>
<dbReference type="HOGENOM" id="CLU_026481_0_0_5"/>
<dbReference type="PhylomeDB" id="Q2YNH1"/>
<dbReference type="Proteomes" id="UP000002719">
    <property type="component" value="Chromosome I"/>
</dbReference>
<dbReference type="GO" id="GO:0005737">
    <property type="term" value="C:cytoplasm"/>
    <property type="evidence" value="ECO:0007669"/>
    <property type="project" value="UniProtKB-SubCell"/>
</dbReference>
<dbReference type="GO" id="GO:0051539">
    <property type="term" value="F:4 iron, 4 sulfur cluster binding"/>
    <property type="evidence" value="ECO:0007669"/>
    <property type="project" value="UniProtKB-UniRule"/>
</dbReference>
<dbReference type="GO" id="GO:0005524">
    <property type="term" value="F:ATP binding"/>
    <property type="evidence" value="ECO:0007669"/>
    <property type="project" value="UniProtKB-UniRule"/>
</dbReference>
<dbReference type="GO" id="GO:0000287">
    <property type="term" value="F:magnesium ion binding"/>
    <property type="evidence" value="ECO:0007669"/>
    <property type="project" value="UniProtKB-UniRule"/>
</dbReference>
<dbReference type="GO" id="GO:0016783">
    <property type="term" value="F:sulfurtransferase activity"/>
    <property type="evidence" value="ECO:0007669"/>
    <property type="project" value="UniProtKB-UniRule"/>
</dbReference>
<dbReference type="GO" id="GO:0000049">
    <property type="term" value="F:tRNA binding"/>
    <property type="evidence" value="ECO:0007669"/>
    <property type="project" value="UniProtKB-KW"/>
</dbReference>
<dbReference type="GO" id="GO:0034227">
    <property type="term" value="P:tRNA thio-modification"/>
    <property type="evidence" value="ECO:0007669"/>
    <property type="project" value="UniProtKB-UniRule"/>
</dbReference>
<dbReference type="CDD" id="cd24138">
    <property type="entry name" value="TtcA-like"/>
    <property type="match status" value="1"/>
</dbReference>
<dbReference type="Gene3D" id="3.40.50.620">
    <property type="entry name" value="HUPs"/>
    <property type="match status" value="1"/>
</dbReference>
<dbReference type="HAMAP" id="MF_01850">
    <property type="entry name" value="TtcA"/>
    <property type="match status" value="1"/>
</dbReference>
<dbReference type="InterPro" id="IPR014729">
    <property type="entry name" value="Rossmann-like_a/b/a_fold"/>
</dbReference>
<dbReference type="InterPro" id="IPR011063">
    <property type="entry name" value="TilS/TtcA_N"/>
</dbReference>
<dbReference type="InterPro" id="IPR012089">
    <property type="entry name" value="tRNA_Cyd_32_2_STrfase"/>
</dbReference>
<dbReference type="InterPro" id="IPR035107">
    <property type="entry name" value="tRNA_thiolation_TtcA_Ctu1"/>
</dbReference>
<dbReference type="NCBIfam" id="NF007972">
    <property type="entry name" value="PRK10696.1"/>
    <property type="match status" value="1"/>
</dbReference>
<dbReference type="PANTHER" id="PTHR43686:SF1">
    <property type="entry name" value="AMINOTRAN_5 DOMAIN-CONTAINING PROTEIN"/>
    <property type="match status" value="1"/>
</dbReference>
<dbReference type="PANTHER" id="PTHR43686">
    <property type="entry name" value="SULFURTRANSFERASE-RELATED"/>
    <property type="match status" value="1"/>
</dbReference>
<dbReference type="Pfam" id="PF01171">
    <property type="entry name" value="ATP_bind_3"/>
    <property type="match status" value="1"/>
</dbReference>
<dbReference type="PIRSF" id="PIRSF004976">
    <property type="entry name" value="ATPase_YdaO"/>
    <property type="match status" value="1"/>
</dbReference>
<dbReference type="SUPFAM" id="SSF52402">
    <property type="entry name" value="Adenine nucleotide alpha hydrolases-like"/>
    <property type="match status" value="1"/>
</dbReference>
<protein>
    <recommendedName>
        <fullName evidence="1">tRNA-cytidine(32) 2-sulfurtransferase</fullName>
        <ecNumber evidence="1">2.8.1.-</ecNumber>
    </recommendedName>
    <alternativeName>
        <fullName evidence="1">Two-thiocytidine biosynthesis protein A</fullName>
    </alternativeName>
    <alternativeName>
        <fullName evidence="1">tRNA 2-thiocytidine biosynthesis protein TtcA</fullName>
    </alternativeName>
</protein>
<keyword id="KW-0004">4Fe-4S</keyword>
<keyword id="KW-0067">ATP-binding</keyword>
<keyword id="KW-0963">Cytoplasm</keyword>
<keyword id="KW-0408">Iron</keyword>
<keyword id="KW-0411">Iron-sulfur</keyword>
<keyword id="KW-0460">Magnesium</keyword>
<keyword id="KW-0479">Metal-binding</keyword>
<keyword id="KW-0547">Nucleotide-binding</keyword>
<keyword id="KW-1185">Reference proteome</keyword>
<keyword id="KW-0694">RNA-binding</keyword>
<keyword id="KW-0808">Transferase</keyword>
<keyword id="KW-0819">tRNA processing</keyword>
<keyword id="KW-0820">tRNA-binding</keyword>
<proteinExistence type="inferred from homology"/>
<organism>
    <name type="scientific">Brucella abortus (strain 2308)</name>
    <dbReference type="NCBI Taxonomy" id="359391"/>
    <lineage>
        <taxon>Bacteria</taxon>
        <taxon>Pseudomonadati</taxon>
        <taxon>Pseudomonadota</taxon>
        <taxon>Alphaproteobacteria</taxon>
        <taxon>Hyphomicrobiales</taxon>
        <taxon>Brucellaceae</taxon>
        <taxon>Brucella/Ochrobactrum group</taxon>
        <taxon>Brucella</taxon>
    </lineage>
</organism>
<reference key="1">
    <citation type="journal article" date="2005" name="Infect. Immun.">
        <title>Whole-genome analyses of speciation events in pathogenic Brucellae.</title>
        <authorList>
            <person name="Chain P.S."/>
            <person name="Comerci D.J."/>
            <person name="Tolmasky M.E."/>
            <person name="Larimer F.W."/>
            <person name="Malfatti S.A."/>
            <person name="Vergez L.M."/>
            <person name="Aguero F."/>
            <person name="Land M.L."/>
            <person name="Ugalde R.A."/>
            <person name="Garcia E."/>
        </authorList>
    </citation>
    <scope>NUCLEOTIDE SEQUENCE [LARGE SCALE GENOMIC DNA]</scope>
    <source>
        <strain>2308</strain>
    </source>
</reference>
<sequence>MNAFDADITEHADSSGCHPLFRDVPATVEFNKLRKRLLRLTRQAIEDFAMVKPGDRWMVCLSGGKDSYGLLALLLDLKWRGLLPVELLAVNLDQGQPNFPKHILPDFLTRYGIEHRIEYQDTYSIVTDKLPETSTYCSLCSRLRRGNLYRIAREEGCSAIVLGHHREDILETFFMNLFHGGRLAAMPPKLLNDEGDLMVFRPLAYAAEDDLEKFANAMQFPIIPCDLCGSQDGLQRNAMKAMLIDIEKRMPGRKDTMIRALTNVRPSHLLDRKLFDFAGLMANGEKGSDDALW</sequence>
<accession>Q2YNH1</accession>
<feature type="chain" id="PRO_0000348673" description="tRNA-cytidine(32) 2-sulfurtransferase">
    <location>
        <begin position="1"/>
        <end position="293"/>
    </location>
</feature>
<feature type="short sequence motif" description="PP-loop motif" evidence="1">
    <location>
        <begin position="62"/>
        <end position="67"/>
    </location>
</feature>
<feature type="binding site" evidence="1">
    <location>
        <position position="137"/>
    </location>
    <ligand>
        <name>[4Fe-4S] cluster</name>
        <dbReference type="ChEBI" id="CHEBI:49883"/>
    </ligand>
</feature>
<feature type="binding site" evidence="1">
    <location>
        <position position="140"/>
    </location>
    <ligand>
        <name>[4Fe-4S] cluster</name>
        <dbReference type="ChEBI" id="CHEBI:49883"/>
    </ligand>
</feature>
<feature type="binding site" evidence="1">
    <location>
        <position position="228"/>
    </location>
    <ligand>
        <name>[4Fe-4S] cluster</name>
        <dbReference type="ChEBI" id="CHEBI:49883"/>
    </ligand>
</feature>
<name>TTCA_BRUA2</name>
<gene>
    <name evidence="1" type="primary">ttcA</name>
    <name type="ordered locus">BAB1_0852</name>
</gene>
<evidence type="ECO:0000255" key="1">
    <source>
        <dbReference type="HAMAP-Rule" id="MF_01850"/>
    </source>
</evidence>